<dbReference type="EC" id="2.7.7.8" evidence="1"/>
<dbReference type="EMBL" id="AP009044">
    <property type="protein sequence ID" value="BAF54798.1"/>
    <property type="molecule type" value="Genomic_DNA"/>
</dbReference>
<dbReference type="RefSeq" id="WP_011897394.1">
    <property type="nucleotide sequence ID" value="NC_009342.1"/>
</dbReference>
<dbReference type="SMR" id="A4QEY2"/>
<dbReference type="KEGG" id="cgt:cgR_1804"/>
<dbReference type="HOGENOM" id="CLU_004217_2_2_11"/>
<dbReference type="PhylomeDB" id="A4QEY2"/>
<dbReference type="Proteomes" id="UP000006698">
    <property type="component" value="Chromosome"/>
</dbReference>
<dbReference type="GO" id="GO:0005829">
    <property type="term" value="C:cytosol"/>
    <property type="evidence" value="ECO:0007669"/>
    <property type="project" value="TreeGrafter"/>
</dbReference>
<dbReference type="GO" id="GO:0000175">
    <property type="term" value="F:3'-5'-RNA exonuclease activity"/>
    <property type="evidence" value="ECO:0007669"/>
    <property type="project" value="TreeGrafter"/>
</dbReference>
<dbReference type="GO" id="GO:0000287">
    <property type="term" value="F:magnesium ion binding"/>
    <property type="evidence" value="ECO:0007669"/>
    <property type="project" value="UniProtKB-UniRule"/>
</dbReference>
<dbReference type="GO" id="GO:0004654">
    <property type="term" value="F:polyribonucleotide nucleotidyltransferase activity"/>
    <property type="evidence" value="ECO:0007669"/>
    <property type="project" value="UniProtKB-UniRule"/>
</dbReference>
<dbReference type="GO" id="GO:0003723">
    <property type="term" value="F:RNA binding"/>
    <property type="evidence" value="ECO:0007669"/>
    <property type="project" value="UniProtKB-UniRule"/>
</dbReference>
<dbReference type="GO" id="GO:0006402">
    <property type="term" value="P:mRNA catabolic process"/>
    <property type="evidence" value="ECO:0007669"/>
    <property type="project" value="UniProtKB-UniRule"/>
</dbReference>
<dbReference type="GO" id="GO:0006396">
    <property type="term" value="P:RNA processing"/>
    <property type="evidence" value="ECO:0007669"/>
    <property type="project" value="InterPro"/>
</dbReference>
<dbReference type="CDD" id="cd02393">
    <property type="entry name" value="KH-I_PNPase"/>
    <property type="match status" value="1"/>
</dbReference>
<dbReference type="CDD" id="cd11364">
    <property type="entry name" value="RNase_PH_PNPase_2"/>
    <property type="match status" value="1"/>
</dbReference>
<dbReference type="FunFam" id="2.40.50.140:FF:000069">
    <property type="entry name" value="Polyribonucleotide nucleotidyltransferase"/>
    <property type="match status" value="1"/>
</dbReference>
<dbReference type="FunFam" id="3.30.1370.10:FF:000001">
    <property type="entry name" value="Polyribonucleotide nucleotidyltransferase"/>
    <property type="match status" value="1"/>
</dbReference>
<dbReference type="FunFam" id="3.30.230.70:FF:000001">
    <property type="entry name" value="Polyribonucleotide nucleotidyltransferase"/>
    <property type="match status" value="1"/>
</dbReference>
<dbReference type="FunFam" id="3.30.230.70:FF:000002">
    <property type="entry name" value="Polyribonucleotide nucleotidyltransferase"/>
    <property type="match status" value="1"/>
</dbReference>
<dbReference type="Gene3D" id="3.30.230.70">
    <property type="entry name" value="GHMP Kinase, N-terminal domain"/>
    <property type="match status" value="2"/>
</dbReference>
<dbReference type="Gene3D" id="3.30.1370.10">
    <property type="entry name" value="K Homology domain, type 1"/>
    <property type="match status" value="1"/>
</dbReference>
<dbReference type="Gene3D" id="2.40.50.140">
    <property type="entry name" value="Nucleic acid-binding proteins"/>
    <property type="match status" value="1"/>
</dbReference>
<dbReference type="HAMAP" id="MF_01595">
    <property type="entry name" value="PNPase"/>
    <property type="match status" value="1"/>
</dbReference>
<dbReference type="InterPro" id="IPR001247">
    <property type="entry name" value="ExoRNase_PH_dom1"/>
</dbReference>
<dbReference type="InterPro" id="IPR036345">
    <property type="entry name" value="ExoRNase_PH_dom2_sf"/>
</dbReference>
<dbReference type="InterPro" id="IPR014069">
    <property type="entry name" value="GPSI/PNP"/>
</dbReference>
<dbReference type="InterPro" id="IPR004087">
    <property type="entry name" value="KH_dom"/>
</dbReference>
<dbReference type="InterPro" id="IPR004088">
    <property type="entry name" value="KH_dom_type_1"/>
</dbReference>
<dbReference type="InterPro" id="IPR036612">
    <property type="entry name" value="KH_dom_type_1_sf"/>
</dbReference>
<dbReference type="InterPro" id="IPR012340">
    <property type="entry name" value="NA-bd_OB-fold"/>
</dbReference>
<dbReference type="InterPro" id="IPR012162">
    <property type="entry name" value="PNPase"/>
</dbReference>
<dbReference type="InterPro" id="IPR027408">
    <property type="entry name" value="PNPase/RNase_PH_dom_sf"/>
</dbReference>
<dbReference type="InterPro" id="IPR015848">
    <property type="entry name" value="PNPase_PH_RNA-bd_bac/org-type"/>
</dbReference>
<dbReference type="InterPro" id="IPR036456">
    <property type="entry name" value="PNPase_PH_RNA-bd_sf"/>
</dbReference>
<dbReference type="InterPro" id="IPR020568">
    <property type="entry name" value="Ribosomal_Su5_D2-typ_SF"/>
</dbReference>
<dbReference type="InterPro" id="IPR003029">
    <property type="entry name" value="S1_domain"/>
</dbReference>
<dbReference type="NCBIfam" id="TIGR03591">
    <property type="entry name" value="polynuc_phos"/>
    <property type="match status" value="1"/>
</dbReference>
<dbReference type="NCBIfam" id="TIGR02696">
    <property type="entry name" value="pppGpp_PNP"/>
    <property type="match status" value="1"/>
</dbReference>
<dbReference type="NCBIfam" id="NF008805">
    <property type="entry name" value="PRK11824.1"/>
    <property type="match status" value="1"/>
</dbReference>
<dbReference type="PANTHER" id="PTHR11252">
    <property type="entry name" value="POLYRIBONUCLEOTIDE NUCLEOTIDYLTRANSFERASE"/>
    <property type="match status" value="1"/>
</dbReference>
<dbReference type="PANTHER" id="PTHR11252:SF0">
    <property type="entry name" value="POLYRIBONUCLEOTIDE NUCLEOTIDYLTRANSFERASE 1, MITOCHONDRIAL"/>
    <property type="match status" value="1"/>
</dbReference>
<dbReference type="Pfam" id="PF00013">
    <property type="entry name" value="KH_1"/>
    <property type="match status" value="1"/>
</dbReference>
<dbReference type="Pfam" id="PF03726">
    <property type="entry name" value="PNPase"/>
    <property type="match status" value="1"/>
</dbReference>
<dbReference type="Pfam" id="PF01138">
    <property type="entry name" value="RNase_PH"/>
    <property type="match status" value="2"/>
</dbReference>
<dbReference type="Pfam" id="PF00575">
    <property type="entry name" value="S1"/>
    <property type="match status" value="1"/>
</dbReference>
<dbReference type="PIRSF" id="PIRSF005499">
    <property type="entry name" value="PNPase"/>
    <property type="match status" value="1"/>
</dbReference>
<dbReference type="SMART" id="SM00322">
    <property type="entry name" value="KH"/>
    <property type="match status" value="1"/>
</dbReference>
<dbReference type="SMART" id="SM00316">
    <property type="entry name" value="S1"/>
    <property type="match status" value="1"/>
</dbReference>
<dbReference type="SUPFAM" id="SSF54791">
    <property type="entry name" value="Eukaryotic type KH-domain (KH-domain type I)"/>
    <property type="match status" value="1"/>
</dbReference>
<dbReference type="SUPFAM" id="SSF50249">
    <property type="entry name" value="Nucleic acid-binding proteins"/>
    <property type="match status" value="1"/>
</dbReference>
<dbReference type="SUPFAM" id="SSF46915">
    <property type="entry name" value="Polynucleotide phosphorylase/guanosine pentaphosphate synthase (PNPase/GPSI), domain 3"/>
    <property type="match status" value="1"/>
</dbReference>
<dbReference type="SUPFAM" id="SSF55666">
    <property type="entry name" value="Ribonuclease PH domain 2-like"/>
    <property type="match status" value="2"/>
</dbReference>
<dbReference type="SUPFAM" id="SSF54211">
    <property type="entry name" value="Ribosomal protein S5 domain 2-like"/>
    <property type="match status" value="2"/>
</dbReference>
<dbReference type="PROSITE" id="PS50084">
    <property type="entry name" value="KH_TYPE_1"/>
    <property type="match status" value="1"/>
</dbReference>
<dbReference type="PROSITE" id="PS50126">
    <property type="entry name" value="S1"/>
    <property type="match status" value="1"/>
</dbReference>
<name>PNP_CORGB</name>
<organism>
    <name type="scientific">Corynebacterium glutamicum (strain R)</name>
    <dbReference type="NCBI Taxonomy" id="340322"/>
    <lineage>
        <taxon>Bacteria</taxon>
        <taxon>Bacillati</taxon>
        <taxon>Actinomycetota</taxon>
        <taxon>Actinomycetes</taxon>
        <taxon>Mycobacteriales</taxon>
        <taxon>Corynebacteriaceae</taxon>
        <taxon>Corynebacterium</taxon>
    </lineage>
</organism>
<evidence type="ECO:0000255" key="1">
    <source>
        <dbReference type="HAMAP-Rule" id="MF_01595"/>
    </source>
</evidence>
<proteinExistence type="inferred from homology"/>
<comment type="function">
    <text evidence="1">Involved in mRNA degradation. Catalyzes the phosphorolysis of single-stranded polyribonucleotides processively in the 3'- to 5'-direction.</text>
</comment>
<comment type="catalytic activity">
    <reaction evidence="1">
        <text>RNA(n+1) + phosphate = RNA(n) + a ribonucleoside 5'-diphosphate</text>
        <dbReference type="Rhea" id="RHEA:22096"/>
        <dbReference type="Rhea" id="RHEA-COMP:14527"/>
        <dbReference type="Rhea" id="RHEA-COMP:17342"/>
        <dbReference type="ChEBI" id="CHEBI:43474"/>
        <dbReference type="ChEBI" id="CHEBI:57930"/>
        <dbReference type="ChEBI" id="CHEBI:140395"/>
        <dbReference type="EC" id="2.7.7.8"/>
    </reaction>
</comment>
<comment type="cofactor">
    <cofactor evidence="1">
        <name>Mg(2+)</name>
        <dbReference type="ChEBI" id="CHEBI:18420"/>
    </cofactor>
</comment>
<comment type="subcellular location">
    <subcellularLocation>
        <location evidence="1">Cytoplasm</location>
    </subcellularLocation>
</comment>
<comment type="similarity">
    <text evidence="1">Belongs to the polyribonucleotide nucleotidyltransferase family.</text>
</comment>
<gene>
    <name evidence="1" type="primary">pnp</name>
    <name type="ordered locus">cgR_1804</name>
</gene>
<sequence length="753" mass="81289">MSDVKYFEDTEFGLIEAVATIDNGDFGTRTIRFETGQLARQADGAVTTYLDDDTMLLATTTASNQPREGFDFFPLTVDVEERMYAAGRIPGSFFRREGRPSTEAILACRLIDRPLRPTFVKGLRNEVQIVVTVMSMNPEDYYDVVAINGASAATRISGLPVSGAVGGVRMALVVDEKHPEGQWVAFPTHAQHEQSVFEIVVAGRLVERKRGNKTFSDVAVMMVEAGASENVVNRVKDGAPAPTEKIVSDGLEAAKPFIDILCRAQEGLAQRVGNAAKEFPLFPPYTDEVYSAVERKVSKKLASLLTLKAKQERDDATNAYMEEIEAELLPKFEASYSSAAEASKEIRAAYNAVMKSIVRRMILTDHFRIDGRGVTDIRDLAVEVELIPRAHGSSLFERGETQILGVTTLDMLKMEQQIDSLAPGDAKRYMHHYNFPPYSTGETGRVGSPKRREIGHGALAERAVLPVIPSREEFPYSIRQVSEALGSNGSTSMGSVCASTLSLYNAGVPLKAPVAGIAMGLVSGEIDGKTEYVALTDILGAEDAFGDMDFKVAGTADFITALQLDTKLDGIPSKVLSDALEQARDARLTILNTMADVINGPDEMSKFAPRITTVKIPVAKIGELIGPKGKNINALTEETGANISIEDDGTVFISAADGASAEAAIEKINALANPQLPKVGERFLGTVVKTTAFGAFVSLLPGRDGLVHISKLGNGKRVEKVDDVVKVGEKIQVEIADIDNRGKISLVPVAEED</sequence>
<keyword id="KW-0963">Cytoplasm</keyword>
<keyword id="KW-0460">Magnesium</keyword>
<keyword id="KW-0479">Metal-binding</keyword>
<keyword id="KW-0548">Nucleotidyltransferase</keyword>
<keyword id="KW-0694">RNA-binding</keyword>
<keyword id="KW-0808">Transferase</keyword>
<reference key="1">
    <citation type="journal article" date="2007" name="Microbiology">
        <title>Comparative analysis of the Corynebacterium glutamicum group and complete genome sequence of strain R.</title>
        <authorList>
            <person name="Yukawa H."/>
            <person name="Omumasaba C.A."/>
            <person name="Nonaka H."/>
            <person name="Kos P."/>
            <person name="Okai N."/>
            <person name="Suzuki N."/>
            <person name="Suda M."/>
            <person name="Tsuge Y."/>
            <person name="Watanabe J."/>
            <person name="Ikeda Y."/>
            <person name="Vertes A.A."/>
            <person name="Inui M."/>
        </authorList>
    </citation>
    <scope>NUCLEOTIDE SEQUENCE [LARGE SCALE GENOMIC DNA]</scope>
    <source>
        <strain>R</strain>
    </source>
</reference>
<protein>
    <recommendedName>
        <fullName evidence="1">Polyribonucleotide nucleotidyltransferase</fullName>
        <ecNumber evidence="1">2.7.7.8</ecNumber>
    </recommendedName>
    <alternativeName>
        <fullName evidence="1">Polynucleotide phosphorylase</fullName>
        <shortName evidence="1">PNPase</shortName>
    </alternativeName>
</protein>
<accession>A4QEY2</accession>
<feature type="chain" id="PRO_0000329610" description="Polyribonucleotide nucleotidyltransferase">
    <location>
        <begin position="1"/>
        <end position="753"/>
    </location>
</feature>
<feature type="domain" description="KH" evidence="1">
    <location>
        <begin position="609"/>
        <end position="668"/>
    </location>
</feature>
<feature type="domain" description="S1 motif" evidence="1">
    <location>
        <begin position="680"/>
        <end position="749"/>
    </location>
</feature>
<feature type="binding site" evidence="1">
    <location>
        <position position="543"/>
    </location>
    <ligand>
        <name>Mg(2+)</name>
        <dbReference type="ChEBI" id="CHEBI:18420"/>
    </ligand>
</feature>
<feature type="binding site" evidence="1">
    <location>
        <position position="549"/>
    </location>
    <ligand>
        <name>Mg(2+)</name>
        <dbReference type="ChEBI" id="CHEBI:18420"/>
    </ligand>
</feature>